<comment type="function">
    <text evidence="1">Part of an ATP-dependent transport system responsible for the release of lipoproteins targeted to the outer membrane from the inner membrane. Such a release is dependent of the sorting-signal (absence of an Asp at position 2 of the mature lipoprotein) and of LolA (By similarity).</text>
</comment>
<comment type="subcellular location">
    <subcellularLocation>
        <location evidence="1">Cell membrane</location>
        <topology evidence="1">Multi-pass membrane protein</topology>
    </subcellularLocation>
</comment>
<comment type="similarity">
    <text evidence="3">Belongs to the ABC-4 integral membrane protein family. LolC/E subfamily.</text>
</comment>
<name>LOLC_BUCAP</name>
<accession>Q8K9N8</accession>
<reference key="1">
    <citation type="journal article" date="2002" name="Science">
        <title>50 million years of genomic stasis in endosymbiotic bacteria.</title>
        <authorList>
            <person name="Tamas I."/>
            <person name="Klasson L."/>
            <person name="Canbaeck B."/>
            <person name="Naeslund A.K."/>
            <person name="Eriksson A.-S."/>
            <person name="Wernegreen J.J."/>
            <person name="Sandstroem J.P."/>
            <person name="Moran N.A."/>
            <person name="Andersson S.G.E."/>
        </authorList>
    </citation>
    <scope>NUCLEOTIDE SEQUENCE [LARGE SCALE GENOMIC DNA]</scope>
    <source>
        <strain>Sg</strain>
    </source>
</reference>
<proteinExistence type="inferred from homology"/>
<organism>
    <name type="scientific">Buchnera aphidicola subsp. Schizaphis graminum (strain Sg)</name>
    <dbReference type="NCBI Taxonomy" id="198804"/>
    <lineage>
        <taxon>Bacteria</taxon>
        <taxon>Pseudomonadati</taxon>
        <taxon>Pseudomonadota</taxon>
        <taxon>Gammaproteobacteria</taxon>
        <taxon>Enterobacterales</taxon>
        <taxon>Erwiniaceae</taxon>
        <taxon>Buchnera</taxon>
    </lineage>
</organism>
<protein>
    <recommendedName>
        <fullName>Lipoprotein-releasing system transmembrane protein LolC</fullName>
    </recommendedName>
</protein>
<dbReference type="EMBL" id="AE013218">
    <property type="protein sequence ID" value="AAM67840.1"/>
    <property type="molecule type" value="Genomic_DNA"/>
</dbReference>
<dbReference type="RefSeq" id="WP_011053807.1">
    <property type="nucleotide sequence ID" value="NC_004061.1"/>
</dbReference>
<dbReference type="SMR" id="Q8K9N8"/>
<dbReference type="STRING" id="198804.BUsg_284"/>
<dbReference type="GeneID" id="93003754"/>
<dbReference type="KEGG" id="bas:BUsg_284"/>
<dbReference type="eggNOG" id="COG4591">
    <property type="taxonomic scope" value="Bacteria"/>
</dbReference>
<dbReference type="HOGENOM" id="CLU_000604_8_1_6"/>
<dbReference type="Proteomes" id="UP000000416">
    <property type="component" value="Chromosome"/>
</dbReference>
<dbReference type="GO" id="GO:0098797">
    <property type="term" value="C:plasma membrane protein complex"/>
    <property type="evidence" value="ECO:0007669"/>
    <property type="project" value="TreeGrafter"/>
</dbReference>
<dbReference type="GO" id="GO:0044874">
    <property type="term" value="P:lipoprotein localization to outer membrane"/>
    <property type="evidence" value="ECO:0007669"/>
    <property type="project" value="TreeGrafter"/>
</dbReference>
<dbReference type="InterPro" id="IPR003838">
    <property type="entry name" value="ABC3_permease_C"/>
</dbReference>
<dbReference type="InterPro" id="IPR051447">
    <property type="entry name" value="Lipoprotein-release_system"/>
</dbReference>
<dbReference type="InterPro" id="IPR025857">
    <property type="entry name" value="MacB_PCD"/>
</dbReference>
<dbReference type="PANTHER" id="PTHR30489">
    <property type="entry name" value="LIPOPROTEIN-RELEASING SYSTEM TRANSMEMBRANE PROTEIN LOLE"/>
    <property type="match status" value="1"/>
</dbReference>
<dbReference type="PANTHER" id="PTHR30489:SF0">
    <property type="entry name" value="LIPOPROTEIN-RELEASING SYSTEM TRANSMEMBRANE PROTEIN LOLE"/>
    <property type="match status" value="1"/>
</dbReference>
<dbReference type="Pfam" id="PF02687">
    <property type="entry name" value="FtsX"/>
    <property type="match status" value="1"/>
</dbReference>
<dbReference type="Pfam" id="PF12704">
    <property type="entry name" value="MacB_PCD"/>
    <property type="match status" value="1"/>
</dbReference>
<sequence>MYKPIYIFIGLRYLWNPYLPNFKKIIIILSILGIGIGISSTIITISIMNGFQNKFKNDILSFIPHIIITNKNRNINKLNFPKETLKLKNVEEITDFISKKVIIENKNEINIGEIIGINIKNEKNLENYNIKKFLHTLHSRKYNAIIGSELAKKMHVNINDQIKLIVLPISKKKFLQNDLNIKLFKITGIFSTNSEIDEYQILINKKNALNFLNYNKNYITGWKIKLKDPFILNIQKIKKLNKNFIILDWKTKKGELFKAMKIEKYIMLFFFILILLVSSFNIVISLTMNVLDKKNNISIFQSQGLSRYKIMLIFIILGSTISIVGNSFGTIISIILIFQKDFLNFLIKIFFIDIEIPIEISLIQILTINITFIFLTILSTLYPIWYAIKSTPSRILSDE</sequence>
<evidence type="ECO:0000250" key="1"/>
<evidence type="ECO:0000255" key="2"/>
<evidence type="ECO:0000305" key="3"/>
<keyword id="KW-1003">Cell membrane</keyword>
<keyword id="KW-0472">Membrane</keyword>
<keyword id="KW-0812">Transmembrane</keyword>
<keyword id="KW-1133">Transmembrane helix</keyword>
<keyword id="KW-0813">Transport</keyword>
<gene>
    <name type="primary">lolC</name>
    <name type="ordered locus">BUsg_284</name>
</gene>
<feature type="chain" id="PRO_0000201809" description="Lipoprotein-releasing system transmembrane protein LolC">
    <location>
        <begin position="1"/>
        <end position="399"/>
    </location>
</feature>
<feature type="transmembrane region" description="Helical" evidence="2">
    <location>
        <begin position="25"/>
        <end position="45"/>
    </location>
</feature>
<feature type="transmembrane region" description="Helical" evidence="2">
    <location>
        <begin position="266"/>
        <end position="286"/>
    </location>
</feature>
<feature type="transmembrane region" description="Helical" evidence="2">
    <location>
        <begin position="312"/>
        <end position="332"/>
    </location>
</feature>
<feature type="transmembrane region" description="Helical" evidence="2">
    <location>
        <begin position="358"/>
        <end position="378"/>
    </location>
</feature>